<protein>
    <recommendedName>
        <fullName evidence="1">Phosphoribosyl-AMP cyclohydrolase</fullName>
        <shortName evidence="1">PRA-CH</shortName>
        <ecNumber evidence="1">3.5.4.19</ecNumber>
    </recommendedName>
</protein>
<sequence>MDQDREQGSALDPRYDAAGLVTAVVTDHRSGEVLMLAHMNAEALAATLESGEATFFSRSRGRLWKKGESSGNVMRVVEARIDCDQDAIWLRCEPAGPACHTGERSCFYRRIDRDGPTLVRTIEV</sequence>
<feature type="chain" id="PRO_1000063436" description="Phosphoribosyl-AMP cyclohydrolase">
    <location>
        <begin position="1"/>
        <end position="124"/>
    </location>
</feature>
<feature type="binding site" evidence="1">
    <location>
        <position position="82"/>
    </location>
    <ligand>
        <name>Mg(2+)</name>
        <dbReference type="ChEBI" id="CHEBI:18420"/>
    </ligand>
</feature>
<feature type="binding site" evidence="1">
    <location>
        <position position="83"/>
    </location>
    <ligand>
        <name>Zn(2+)</name>
        <dbReference type="ChEBI" id="CHEBI:29105"/>
        <note>ligand shared between dimeric partners</note>
    </ligand>
</feature>
<feature type="binding site" evidence="1">
    <location>
        <position position="84"/>
    </location>
    <ligand>
        <name>Mg(2+)</name>
        <dbReference type="ChEBI" id="CHEBI:18420"/>
    </ligand>
</feature>
<feature type="binding site" evidence="1">
    <location>
        <position position="86"/>
    </location>
    <ligand>
        <name>Mg(2+)</name>
        <dbReference type="ChEBI" id="CHEBI:18420"/>
    </ligand>
</feature>
<feature type="binding site" evidence="1">
    <location>
        <position position="99"/>
    </location>
    <ligand>
        <name>Zn(2+)</name>
        <dbReference type="ChEBI" id="CHEBI:29105"/>
        <note>ligand shared between dimeric partners</note>
    </ligand>
</feature>
<feature type="binding site" evidence="1">
    <location>
        <position position="106"/>
    </location>
    <ligand>
        <name>Zn(2+)</name>
        <dbReference type="ChEBI" id="CHEBI:29105"/>
        <note>ligand shared between dimeric partners</note>
    </ligand>
</feature>
<accession>A5V3S9</accession>
<comment type="function">
    <text evidence="1">Catalyzes the hydrolysis of the adenine ring of phosphoribosyl-AMP.</text>
</comment>
<comment type="catalytic activity">
    <reaction evidence="1">
        <text>1-(5-phospho-beta-D-ribosyl)-5'-AMP + H2O = 1-(5-phospho-beta-D-ribosyl)-5-[(5-phospho-beta-D-ribosylamino)methylideneamino]imidazole-4-carboxamide</text>
        <dbReference type="Rhea" id="RHEA:20049"/>
        <dbReference type="ChEBI" id="CHEBI:15377"/>
        <dbReference type="ChEBI" id="CHEBI:58435"/>
        <dbReference type="ChEBI" id="CHEBI:59457"/>
        <dbReference type="EC" id="3.5.4.19"/>
    </reaction>
</comment>
<comment type="cofactor">
    <cofactor evidence="1">
        <name>Mg(2+)</name>
        <dbReference type="ChEBI" id="CHEBI:18420"/>
    </cofactor>
    <text evidence="1">Binds 1 Mg(2+) ion per subunit.</text>
</comment>
<comment type="cofactor">
    <cofactor evidence="1">
        <name>Zn(2+)</name>
        <dbReference type="ChEBI" id="CHEBI:29105"/>
    </cofactor>
    <text evidence="1">Binds 1 zinc ion per subunit.</text>
</comment>
<comment type="pathway">
    <text evidence="1">Amino-acid biosynthesis; L-histidine biosynthesis; L-histidine from 5-phospho-alpha-D-ribose 1-diphosphate: step 3/9.</text>
</comment>
<comment type="subunit">
    <text evidence="1">Homodimer.</text>
</comment>
<comment type="subcellular location">
    <subcellularLocation>
        <location evidence="1">Cytoplasm</location>
    </subcellularLocation>
</comment>
<comment type="similarity">
    <text evidence="1">Belongs to the PRA-CH family.</text>
</comment>
<gene>
    <name evidence="1" type="primary">hisI</name>
    <name type="ordered locus">Swit_0577</name>
</gene>
<reference key="1">
    <citation type="journal article" date="2010" name="J. Bacteriol.">
        <title>Genome sequence of the dioxin-mineralizing bacterium Sphingomonas wittichii RW1.</title>
        <authorList>
            <person name="Miller T.R."/>
            <person name="Delcher A.L."/>
            <person name="Salzberg S.L."/>
            <person name="Saunders E."/>
            <person name="Detter J.C."/>
            <person name="Halden R.U."/>
        </authorList>
    </citation>
    <scope>NUCLEOTIDE SEQUENCE [LARGE SCALE GENOMIC DNA]</scope>
    <source>
        <strain>DSM 6014 / CCUG 31198 / JCM 15750 / NBRC 105917 / EY 4224 / RW1</strain>
    </source>
</reference>
<keyword id="KW-0028">Amino-acid biosynthesis</keyword>
<keyword id="KW-0963">Cytoplasm</keyword>
<keyword id="KW-0368">Histidine biosynthesis</keyword>
<keyword id="KW-0378">Hydrolase</keyword>
<keyword id="KW-0460">Magnesium</keyword>
<keyword id="KW-0479">Metal-binding</keyword>
<keyword id="KW-1185">Reference proteome</keyword>
<keyword id="KW-0862">Zinc</keyword>
<dbReference type="EC" id="3.5.4.19" evidence="1"/>
<dbReference type="EMBL" id="CP000699">
    <property type="protein sequence ID" value="ABQ66945.1"/>
    <property type="molecule type" value="Genomic_DNA"/>
</dbReference>
<dbReference type="SMR" id="A5V3S9"/>
<dbReference type="STRING" id="392499.Swit_0577"/>
<dbReference type="PaxDb" id="392499-Swit_0577"/>
<dbReference type="KEGG" id="swi:Swit_0577"/>
<dbReference type="eggNOG" id="COG0139">
    <property type="taxonomic scope" value="Bacteria"/>
</dbReference>
<dbReference type="HOGENOM" id="CLU_048577_5_0_5"/>
<dbReference type="OrthoDB" id="9795769at2"/>
<dbReference type="UniPathway" id="UPA00031">
    <property type="reaction ID" value="UER00008"/>
</dbReference>
<dbReference type="Proteomes" id="UP000001989">
    <property type="component" value="Chromosome"/>
</dbReference>
<dbReference type="GO" id="GO:0005737">
    <property type="term" value="C:cytoplasm"/>
    <property type="evidence" value="ECO:0007669"/>
    <property type="project" value="UniProtKB-SubCell"/>
</dbReference>
<dbReference type="GO" id="GO:0000287">
    <property type="term" value="F:magnesium ion binding"/>
    <property type="evidence" value="ECO:0007669"/>
    <property type="project" value="UniProtKB-UniRule"/>
</dbReference>
<dbReference type="GO" id="GO:0004635">
    <property type="term" value="F:phosphoribosyl-AMP cyclohydrolase activity"/>
    <property type="evidence" value="ECO:0007669"/>
    <property type="project" value="UniProtKB-UniRule"/>
</dbReference>
<dbReference type="GO" id="GO:0008270">
    <property type="term" value="F:zinc ion binding"/>
    <property type="evidence" value="ECO:0007669"/>
    <property type="project" value="UniProtKB-UniRule"/>
</dbReference>
<dbReference type="GO" id="GO:0000105">
    <property type="term" value="P:L-histidine biosynthetic process"/>
    <property type="evidence" value="ECO:0007669"/>
    <property type="project" value="UniProtKB-UniRule"/>
</dbReference>
<dbReference type="FunFam" id="3.10.20.810:FF:000001">
    <property type="entry name" value="Histidine biosynthesis bifunctional protein HisIE"/>
    <property type="match status" value="1"/>
</dbReference>
<dbReference type="Gene3D" id="4.10.80.70">
    <property type="match status" value="1"/>
</dbReference>
<dbReference type="Gene3D" id="3.10.20.810">
    <property type="entry name" value="Phosphoribosyl-AMP cyclohydrolase"/>
    <property type="match status" value="1"/>
</dbReference>
<dbReference type="HAMAP" id="MF_01021">
    <property type="entry name" value="HisI"/>
    <property type="match status" value="1"/>
</dbReference>
<dbReference type="InterPro" id="IPR026660">
    <property type="entry name" value="PRA-CH"/>
</dbReference>
<dbReference type="InterPro" id="IPR002496">
    <property type="entry name" value="PRib_AMP_CycHydrolase_dom"/>
</dbReference>
<dbReference type="InterPro" id="IPR038019">
    <property type="entry name" value="PRib_AMP_CycHydrolase_sf"/>
</dbReference>
<dbReference type="NCBIfam" id="NF000768">
    <property type="entry name" value="PRK00051.1"/>
    <property type="match status" value="1"/>
</dbReference>
<dbReference type="PANTHER" id="PTHR42945">
    <property type="entry name" value="HISTIDINE BIOSYNTHESIS BIFUNCTIONAL PROTEIN"/>
    <property type="match status" value="1"/>
</dbReference>
<dbReference type="PANTHER" id="PTHR42945:SF1">
    <property type="entry name" value="HISTIDINE BIOSYNTHESIS BIFUNCTIONAL PROTEIN HIS7"/>
    <property type="match status" value="1"/>
</dbReference>
<dbReference type="Pfam" id="PF01502">
    <property type="entry name" value="PRA-CH"/>
    <property type="match status" value="1"/>
</dbReference>
<dbReference type="SUPFAM" id="SSF141734">
    <property type="entry name" value="HisI-like"/>
    <property type="match status" value="1"/>
</dbReference>
<organism>
    <name type="scientific">Rhizorhabdus wittichii (strain DSM 6014 / CCUG 31198 / JCM 15750 / NBRC 105917 / EY 4224 / RW1)</name>
    <name type="common">Sphingomonas wittichii</name>
    <dbReference type="NCBI Taxonomy" id="392499"/>
    <lineage>
        <taxon>Bacteria</taxon>
        <taxon>Pseudomonadati</taxon>
        <taxon>Pseudomonadota</taxon>
        <taxon>Alphaproteobacteria</taxon>
        <taxon>Sphingomonadales</taxon>
        <taxon>Sphingomonadaceae</taxon>
        <taxon>Rhizorhabdus</taxon>
    </lineage>
</organism>
<name>HIS3_RHIWR</name>
<evidence type="ECO:0000255" key="1">
    <source>
        <dbReference type="HAMAP-Rule" id="MF_01021"/>
    </source>
</evidence>
<proteinExistence type="inferred from homology"/>